<comment type="function">
    <text evidence="1">Binds 16S rRNA, required for the assembly of 30S particles and may also be responsible for determining the conformation of the 16S rRNA at the A site.</text>
</comment>
<comment type="subunit">
    <text evidence="1">Part of the 30S ribosomal subunit. Contacts proteins S3 and S10.</text>
</comment>
<comment type="similarity">
    <text evidence="1">Belongs to the universal ribosomal protein uS14 family.</text>
</comment>
<accession>A1TYL0</accession>
<dbReference type="EMBL" id="CP000514">
    <property type="protein sequence ID" value="ABM17829.1"/>
    <property type="molecule type" value="Genomic_DNA"/>
</dbReference>
<dbReference type="RefSeq" id="WP_011784255.1">
    <property type="nucleotide sequence ID" value="NC_008740.1"/>
</dbReference>
<dbReference type="SMR" id="A1TYL0"/>
<dbReference type="STRING" id="351348.Maqu_0732"/>
<dbReference type="GeneID" id="31820107"/>
<dbReference type="KEGG" id="maq:Maqu_0732"/>
<dbReference type="eggNOG" id="COG0199">
    <property type="taxonomic scope" value="Bacteria"/>
</dbReference>
<dbReference type="HOGENOM" id="CLU_139869_0_1_6"/>
<dbReference type="OrthoDB" id="9810484at2"/>
<dbReference type="Proteomes" id="UP000000998">
    <property type="component" value="Chromosome"/>
</dbReference>
<dbReference type="GO" id="GO:0005737">
    <property type="term" value="C:cytoplasm"/>
    <property type="evidence" value="ECO:0007669"/>
    <property type="project" value="UniProtKB-ARBA"/>
</dbReference>
<dbReference type="GO" id="GO:0015935">
    <property type="term" value="C:small ribosomal subunit"/>
    <property type="evidence" value="ECO:0007669"/>
    <property type="project" value="TreeGrafter"/>
</dbReference>
<dbReference type="GO" id="GO:0019843">
    <property type="term" value="F:rRNA binding"/>
    <property type="evidence" value="ECO:0007669"/>
    <property type="project" value="UniProtKB-UniRule"/>
</dbReference>
<dbReference type="GO" id="GO:0003735">
    <property type="term" value="F:structural constituent of ribosome"/>
    <property type="evidence" value="ECO:0007669"/>
    <property type="project" value="InterPro"/>
</dbReference>
<dbReference type="GO" id="GO:0006412">
    <property type="term" value="P:translation"/>
    <property type="evidence" value="ECO:0007669"/>
    <property type="project" value="UniProtKB-UniRule"/>
</dbReference>
<dbReference type="FunFam" id="1.10.287.1480:FF:000001">
    <property type="entry name" value="30S ribosomal protein S14"/>
    <property type="match status" value="1"/>
</dbReference>
<dbReference type="Gene3D" id="1.10.287.1480">
    <property type="match status" value="1"/>
</dbReference>
<dbReference type="HAMAP" id="MF_00537">
    <property type="entry name" value="Ribosomal_uS14_1"/>
    <property type="match status" value="1"/>
</dbReference>
<dbReference type="InterPro" id="IPR001209">
    <property type="entry name" value="Ribosomal_uS14"/>
</dbReference>
<dbReference type="InterPro" id="IPR023036">
    <property type="entry name" value="Ribosomal_uS14_bac/plastid"/>
</dbReference>
<dbReference type="InterPro" id="IPR018271">
    <property type="entry name" value="Ribosomal_uS14_CS"/>
</dbReference>
<dbReference type="NCBIfam" id="NF006477">
    <property type="entry name" value="PRK08881.1"/>
    <property type="match status" value="1"/>
</dbReference>
<dbReference type="PANTHER" id="PTHR19836">
    <property type="entry name" value="30S RIBOSOMAL PROTEIN S14"/>
    <property type="match status" value="1"/>
</dbReference>
<dbReference type="PANTHER" id="PTHR19836:SF19">
    <property type="entry name" value="SMALL RIBOSOMAL SUBUNIT PROTEIN US14M"/>
    <property type="match status" value="1"/>
</dbReference>
<dbReference type="Pfam" id="PF00253">
    <property type="entry name" value="Ribosomal_S14"/>
    <property type="match status" value="1"/>
</dbReference>
<dbReference type="SUPFAM" id="SSF57716">
    <property type="entry name" value="Glucocorticoid receptor-like (DNA-binding domain)"/>
    <property type="match status" value="1"/>
</dbReference>
<dbReference type="PROSITE" id="PS00527">
    <property type="entry name" value="RIBOSOMAL_S14"/>
    <property type="match status" value="1"/>
</dbReference>
<keyword id="KW-0687">Ribonucleoprotein</keyword>
<keyword id="KW-0689">Ribosomal protein</keyword>
<keyword id="KW-0694">RNA-binding</keyword>
<keyword id="KW-0699">rRNA-binding</keyword>
<name>RS14_MARN8</name>
<gene>
    <name evidence="1" type="primary">rpsN</name>
    <name type="ordered locus">Maqu_0732</name>
</gene>
<evidence type="ECO:0000255" key="1">
    <source>
        <dbReference type="HAMAP-Rule" id="MF_00537"/>
    </source>
</evidence>
<evidence type="ECO:0000305" key="2"/>
<feature type="chain" id="PRO_1000128440" description="Small ribosomal subunit protein uS14">
    <location>
        <begin position="1"/>
        <end position="101"/>
    </location>
</feature>
<organism>
    <name type="scientific">Marinobacter nauticus (strain ATCC 700491 / DSM 11845 / VT8)</name>
    <name type="common">Marinobacter aquaeolei</name>
    <dbReference type="NCBI Taxonomy" id="351348"/>
    <lineage>
        <taxon>Bacteria</taxon>
        <taxon>Pseudomonadati</taxon>
        <taxon>Pseudomonadota</taxon>
        <taxon>Gammaproteobacteria</taxon>
        <taxon>Pseudomonadales</taxon>
        <taxon>Marinobacteraceae</taxon>
        <taxon>Marinobacter</taxon>
    </lineage>
</organism>
<sequence>MAKVSMKNREQKREKLVAKYAAKRAELKAIIKNPNTSDDDRWDAQMKLQQLPRDSSPSRLRNRCQVTGRPHGVLRKFELSRIKLREYGMRGDVPGLTKASW</sequence>
<protein>
    <recommendedName>
        <fullName evidence="1">Small ribosomal subunit protein uS14</fullName>
    </recommendedName>
    <alternativeName>
        <fullName evidence="2">30S ribosomal protein S14</fullName>
    </alternativeName>
</protein>
<reference key="1">
    <citation type="journal article" date="2011" name="Appl. Environ. Microbiol.">
        <title>Genomic potential of Marinobacter aquaeolei, a biogeochemical 'opportunitroph'.</title>
        <authorList>
            <person name="Singer E."/>
            <person name="Webb E.A."/>
            <person name="Nelson W.C."/>
            <person name="Heidelberg J.F."/>
            <person name="Ivanova N."/>
            <person name="Pati A."/>
            <person name="Edwards K.J."/>
        </authorList>
    </citation>
    <scope>NUCLEOTIDE SEQUENCE [LARGE SCALE GENOMIC DNA]</scope>
    <source>
        <strain>ATCC 700491 / DSM 11845 / VT8</strain>
    </source>
</reference>
<proteinExistence type="inferred from homology"/>